<name>COAD_CAMC1</name>
<organism>
    <name type="scientific">Campylobacter concisus (strain 13826)</name>
    <dbReference type="NCBI Taxonomy" id="360104"/>
    <lineage>
        <taxon>Bacteria</taxon>
        <taxon>Pseudomonadati</taxon>
        <taxon>Campylobacterota</taxon>
        <taxon>Epsilonproteobacteria</taxon>
        <taxon>Campylobacterales</taxon>
        <taxon>Campylobacteraceae</taxon>
        <taxon>Campylobacter</taxon>
    </lineage>
</organism>
<evidence type="ECO:0000255" key="1">
    <source>
        <dbReference type="HAMAP-Rule" id="MF_00151"/>
    </source>
</evidence>
<keyword id="KW-0067">ATP-binding</keyword>
<keyword id="KW-0173">Coenzyme A biosynthesis</keyword>
<keyword id="KW-0963">Cytoplasm</keyword>
<keyword id="KW-0460">Magnesium</keyword>
<keyword id="KW-0547">Nucleotide-binding</keyword>
<keyword id="KW-0548">Nucleotidyltransferase</keyword>
<keyword id="KW-0808">Transferase</keyword>
<accession>A7ZDJ9</accession>
<sequence length="156" mass="17357">MKKSCIYPGTFDPITNGHLDVIIRATKIFDKVIVAVAKSDSKQPMFAHEKRIEMAKEAVCELKNVSVLGFDNLLVDFAKSHGINTVIRGLRAVSDFEYELQIGYANAALWDEFETVYLMPSLNNAFISSSIVRSVLRHDGDVSNLVPAKILKNLKA</sequence>
<protein>
    <recommendedName>
        <fullName evidence="1">Phosphopantetheine adenylyltransferase</fullName>
        <ecNumber evidence="1">2.7.7.3</ecNumber>
    </recommendedName>
    <alternativeName>
        <fullName evidence="1">Dephospho-CoA pyrophosphorylase</fullName>
    </alternativeName>
    <alternativeName>
        <fullName evidence="1">Pantetheine-phosphate adenylyltransferase</fullName>
        <shortName evidence="1">PPAT</shortName>
    </alternativeName>
</protein>
<comment type="function">
    <text evidence="1">Reversibly transfers an adenylyl group from ATP to 4'-phosphopantetheine, yielding dephospho-CoA (dPCoA) and pyrophosphate.</text>
</comment>
<comment type="catalytic activity">
    <reaction evidence="1">
        <text>(R)-4'-phosphopantetheine + ATP + H(+) = 3'-dephospho-CoA + diphosphate</text>
        <dbReference type="Rhea" id="RHEA:19801"/>
        <dbReference type="ChEBI" id="CHEBI:15378"/>
        <dbReference type="ChEBI" id="CHEBI:30616"/>
        <dbReference type="ChEBI" id="CHEBI:33019"/>
        <dbReference type="ChEBI" id="CHEBI:57328"/>
        <dbReference type="ChEBI" id="CHEBI:61723"/>
        <dbReference type="EC" id="2.7.7.3"/>
    </reaction>
</comment>
<comment type="cofactor">
    <cofactor evidence="1">
        <name>Mg(2+)</name>
        <dbReference type="ChEBI" id="CHEBI:18420"/>
    </cofactor>
</comment>
<comment type="pathway">
    <text evidence="1">Cofactor biosynthesis; coenzyme A biosynthesis; CoA from (R)-pantothenate: step 4/5.</text>
</comment>
<comment type="subunit">
    <text evidence="1">Homohexamer.</text>
</comment>
<comment type="subcellular location">
    <subcellularLocation>
        <location evidence="1">Cytoplasm</location>
    </subcellularLocation>
</comment>
<comment type="similarity">
    <text evidence="1">Belongs to the bacterial CoaD family.</text>
</comment>
<gene>
    <name evidence="1" type="primary">coaD</name>
    <name type="ordered locus">Ccon26_09930</name>
    <name type="ORF">CCC13826_1270</name>
</gene>
<proteinExistence type="inferred from homology"/>
<dbReference type="EC" id="2.7.7.3" evidence="1"/>
<dbReference type="EMBL" id="CP000792">
    <property type="protein sequence ID" value="EAT98665.1"/>
    <property type="molecule type" value="Genomic_DNA"/>
</dbReference>
<dbReference type="RefSeq" id="WP_012001782.1">
    <property type="nucleotide sequence ID" value="NC_009802.2"/>
</dbReference>
<dbReference type="SMR" id="A7ZDJ9"/>
<dbReference type="STRING" id="360104.CCC13826_1270"/>
<dbReference type="KEGG" id="cco:CCC13826_1270"/>
<dbReference type="eggNOG" id="COG0669">
    <property type="taxonomic scope" value="Bacteria"/>
</dbReference>
<dbReference type="HOGENOM" id="CLU_100149_0_1_7"/>
<dbReference type="OrthoDB" id="9806661at2"/>
<dbReference type="UniPathway" id="UPA00241">
    <property type="reaction ID" value="UER00355"/>
</dbReference>
<dbReference type="Proteomes" id="UP000001121">
    <property type="component" value="Chromosome"/>
</dbReference>
<dbReference type="GO" id="GO:0005737">
    <property type="term" value="C:cytoplasm"/>
    <property type="evidence" value="ECO:0007669"/>
    <property type="project" value="UniProtKB-SubCell"/>
</dbReference>
<dbReference type="GO" id="GO:0005524">
    <property type="term" value="F:ATP binding"/>
    <property type="evidence" value="ECO:0007669"/>
    <property type="project" value="UniProtKB-KW"/>
</dbReference>
<dbReference type="GO" id="GO:0004595">
    <property type="term" value="F:pantetheine-phosphate adenylyltransferase activity"/>
    <property type="evidence" value="ECO:0007669"/>
    <property type="project" value="UniProtKB-UniRule"/>
</dbReference>
<dbReference type="GO" id="GO:0015937">
    <property type="term" value="P:coenzyme A biosynthetic process"/>
    <property type="evidence" value="ECO:0007669"/>
    <property type="project" value="UniProtKB-UniRule"/>
</dbReference>
<dbReference type="CDD" id="cd02163">
    <property type="entry name" value="PPAT"/>
    <property type="match status" value="1"/>
</dbReference>
<dbReference type="Gene3D" id="3.40.50.620">
    <property type="entry name" value="HUPs"/>
    <property type="match status" value="1"/>
</dbReference>
<dbReference type="HAMAP" id="MF_00151">
    <property type="entry name" value="PPAT_bact"/>
    <property type="match status" value="1"/>
</dbReference>
<dbReference type="InterPro" id="IPR004821">
    <property type="entry name" value="Cyt_trans-like"/>
</dbReference>
<dbReference type="InterPro" id="IPR001980">
    <property type="entry name" value="PPAT"/>
</dbReference>
<dbReference type="InterPro" id="IPR014729">
    <property type="entry name" value="Rossmann-like_a/b/a_fold"/>
</dbReference>
<dbReference type="NCBIfam" id="TIGR01510">
    <property type="entry name" value="coaD_prev_kdtB"/>
    <property type="match status" value="1"/>
</dbReference>
<dbReference type="NCBIfam" id="TIGR00125">
    <property type="entry name" value="cyt_tran_rel"/>
    <property type="match status" value="1"/>
</dbReference>
<dbReference type="PANTHER" id="PTHR21342">
    <property type="entry name" value="PHOSPHOPANTETHEINE ADENYLYLTRANSFERASE"/>
    <property type="match status" value="1"/>
</dbReference>
<dbReference type="PANTHER" id="PTHR21342:SF1">
    <property type="entry name" value="PHOSPHOPANTETHEINE ADENYLYLTRANSFERASE"/>
    <property type="match status" value="1"/>
</dbReference>
<dbReference type="Pfam" id="PF01467">
    <property type="entry name" value="CTP_transf_like"/>
    <property type="match status" value="1"/>
</dbReference>
<dbReference type="PRINTS" id="PR01020">
    <property type="entry name" value="LPSBIOSNTHSS"/>
</dbReference>
<dbReference type="SUPFAM" id="SSF52374">
    <property type="entry name" value="Nucleotidylyl transferase"/>
    <property type="match status" value="1"/>
</dbReference>
<feature type="chain" id="PRO_1000123271" description="Phosphopantetheine adenylyltransferase">
    <location>
        <begin position="1"/>
        <end position="156"/>
    </location>
</feature>
<feature type="binding site" evidence="1">
    <location>
        <begin position="10"/>
        <end position="11"/>
    </location>
    <ligand>
        <name>ATP</name>
        <dbReference type="ChEBI" id="CHEBI:30616"/>
    </ligand>
</feature>
<feature type="binding site" evidence="1">
    <location>
        <position position="10"/>
    </location>
    <ligand>
        <name>substrate</name>
    </ligand>
</feature>
<feature type="binding site" evidence="1">
    <location>
        <position position="18"/>
    </location>
    <ligand>
        <name>ATP</name>
        <dbReference type="ChEBI" id="CHEBI:30616"/>
    </ligand>
</feature>
<feature type="binding site" evidence="1">
    <location>
        <position position="42"/>
    </location>
    <ligand>
        <name>substrate</name>
    </ligand>
</feature>
<feature type="binding site" evidence="1">
    <location>
        <position position="74"/>
    </location>
    <ligand>
        <name>substrate</name>
    </ligand>
</feature>
<feature type="binding site" evidence="1">
    <location>
        <position position="88"/>
    </location>
    <ligand>
        <name>substrate</name>
    </ligand>
</feature>
<feature type="binding site" evidence="1">
    <location>
        <begin position="89"/>
        <end position="91"/>
    </location>
    <ligand>
        <name>ATP</name>
        <dbReference type="ChEBI" id="CHEBI:30616"/>
    </ligand>
</feature>
<feature type="binding site" evidence="1">
    <location>
        <position position="99"/>
    </location>
    <ligand>
        <name>ATP</name>
        <dbReference type="ChEBI" id="CHEBI:30616"/>
    </ligand>
</feature>
<feature type="binding site" evidence="1">
    <location>
        <begin position="124"/>
        <end position="130"/>
    </location>
    <ligand>
        <name>ATP</name>
        <dbReference type="ChEBI" id="CHEBI:30616"/>
    </ligand>
</feature>
<feature type="site" description="Transition state stabilizer" evidence="1">
    <location>
        <position position="18"/>
    </location>
</feature>
<reference key="1">
    <citation type="submission" date="2007-10" db="EMBL/GenBank/DDBJ databases">
        <title>Genome sequence of Campylobacter concisus 13826 isolated from human feces.</title>
        <authorList>
            <person name="Fouts D.E."/>
            <person name="Mongodin E.F."/>
            <person name="Puiu D."/>
            <person name="Sebastian Y."/>
            <person name="Miller W.G."/>
            <person name="Mandrell R.E."/>
            <person name="On S."/>
            <person name="Nelson K.E."/>
        </authorList>
    </citation>
    <scope>NUCLEOTIDE SEQUENCE [LARGE SCALE GENOMIC DNA]</scope>
    <source>
        <strain>13826</strain>
    </source>
</reference>